<feature type="signal peptide" evidence="2">
    <location>
        <begin position="1"/>
        <end position="19"/>
    </location>
</feature>
<feature type="chain" id="PRO_0000012565" description="General odorant-binding protein 2">
    <location>
        <begin position="20"/>
        <end position="160"/>
    </location>
</feature>
<feature type="disulfide bond" evidence="1">
    <location>
        <begin position="38"/>
        <end position="73"/>
    </location>
</feature>
<feature type="disulfide bond" evidence="1">
    <location>
        <begin position="69"/>
        <end position="127"/>
    </location>
</feature>
<feature type="disulfide bond" evidence="1">
    <location>
        <begin position="116"/>
        <end position="136"/>
    </location>
</feature>
<keyword id="KW-1015">Disulfide bond</keyword>
<keyword id="KW-0552">Olfaction</keyword>
<keyword id="KW-0716">Sensory transduction</keyword>
<keyword id="KW-0732">Signal</keyword>
<keyword id="KW-0813">Transport</keyword>
<dbReference type="EMBL" id="X96772">
    <property type="protein sequence ID" value="CAA65575.1"/>
    <property type="molecule type" value="mRNA"/>
</dbReference>
<dbReference type="PIR" id="A60292">
    <property type="entry name" value="A60292"/>
</dbReference>
<dbReference type="SMR" id="Q17075"/>
<dbReference type="GO" id="GO:0005549">
    <property type="term" value="F:odorant binding"/>
    <property type="evidence" value="ECO:0007669"/>
    <property type="project" value="InterPro"/>
</dbReference>
<dbReference type="GO" id="GO:0007608">
    <property type="term" value="P:sensory perception of smell"/>
    <property type="evidence" value="ECO:0007669"/>
    <property type="project" value="UniProtKB-KW"/>
</dbReference>
<dbReference type="CDD" id="cd23992">
    <property type="entry name" value="PBP_GOBP"/>
    <property type="match status" value="1"/>
</dbReference>
<dbReference type="Gene3D" id="1.10.238.20">
    <property type="entry name" value="Pheromone/general odorant binding protein domain"/>
    <property type="match status" value="1"/>
</dbReference>
<dbReference type="InterPro" id="IPR006072">
    <property type="entry name" value="Odorant/phero-bd_Lep"/>
</dbReference>
<dbReference type="InterPro" id="IPR006170">
    <property type="entry name" value="PBP/GOBP"/>
</dbReference>
<dbReference type="InterPro" id="IPR036728">
    <property type="entry name" value="PBP_GOBP_sf"/>
</dbReference>
<dbReference type="Pfam" id="PF01395">
    <property type="entry name" value="PBP_GOBP"/>
    <property type="match status" value="1"/>
</dbReference>
<dbReference type="PIRSF" id="PIRSF015604">
    <property type="entry name" value="Odorant/phero_bd"/>
    <property type="match status" value="1"/>
</dbReference>
<dbReference type="PRINTS" id="PR00484">
    <property type="entry name" value="PBPGOBP"/>
</dbReference>
<dbReference type="SMART" id="SM00708">
    <property type="entry name" value="PhBP"/>
    <property type="match status" value="1"/>
</dbReference>
<dbReference type="SUPFAM" id="SSF47565">
    <property type="entry name" value="Insect pheromone/odorant-binding proteins"/>
    <property type="match status" value="1"/>
</dbReference>
<reference key="1">
    <citation type="journal article" date="1990" name="Insect Biochem.">
        <title>A novel class of binding proteins in the antennea of the silkmoth Antheraea pernyi.</title>
        <authorList>
            <person name="Breer H."/>
            <person name="Krieger J."/>
            <person name="Raming K."/>
        </authorList>
    </citation>
    <scope>NUCLEOTIDE SEQUENCE [MRNA]</scope>
    <source>
        <tissue>Antenna</tissue>
    </source>
</reference>
<sequence length="160" mass="18140">MGYKLLLMYIAIVIDSVIGTAEVMSHVTAHFGKALEECRDESGLSPEILNEFKHFWSEDFDVVHRELGCAIICMSNKFSLLKDDTRIHHVNMHDYVKSFPNGEVLSAKMVNLIHNCEKQYDDITDECDRVVKVAACFKVDAKKEGIAPEVAMIEAVIEKY</sequence>
<accession>Q17075</accession>
<proteinExistence type="evidence at transcript level"/>
<organism>
    <name type="scientific">Antheraea pernyi</name>
    <name type="common">Chinese oak silk moth</name>
    <name type="synonym">Bombyx pernyi</name>
    <dbReference type="NCBI Taxonomy" id="7119"/>
    <lineage>
        <taxon>Eukaryota</taxon>
        <taxon>Metazoa</taxon>
        <taxon>Ecdysozoa</taxon>
        <taxon>Arthropoda</taxon>
        <taxon>Hexapoda</taxon>
        <taxon>Insecta</taxon>
        <taxon>Pterygota</taxon>
        <taxon>Neoptera</taxon>
        <taxon>Endopterygota</taxon>
        <taxon>Lepidoptera</taxon>
        <taxon>Glossata</taxon>
        <taxon>Ditrysia</taxon>
        <taxon>Bombycoidea</taxon>
        <taxon>Saturniidae</taxon>
        <taxon>Saturniinae</taxon>
        <taxon>Saturniini</taxon>
        <taxon>Antheraea</taxon>
    </lineage>
</organism>
<evidence type="ECO:0000250" key="1"/>
<evidence type="ECO:0000255" key="2"/>
<evidence type="ECO:0000305" key="3"/>
<protein>
    <recommendedName>
        <fullName>General odorant-binding protein 2</fullName>
        <shortName>GOBP 2</shortName>
    </recommendedName>
    <alternativeName>
        <fullName>APR-10</fullName>
    </alternativeName>
    <alternativeName>
        <fullName>Pheromone-binding protein 10</fullName>
    </alternativeName>
</protein>
<name>OBP2_ANTPE</name>
<comment type="function">
    <text>Present in the aqueous fluid surrounding olfactory sensory dendrites and are thought to aid in the capture and transport of hydrophobic odorants into and through this fluid.</text>
</comment>
<comment type="tissue specificity">
    <text>Antenna.</text>
</comment>
<comment type="similarity">
    <text evidence="3">Belongs to the PBP/GOBP family.</text>
</comment>